<reference key="1">
    <citation type="journal article" date="1994" name="J. Mol. Evol.">
        <title>The complete nucleotide sequence and gene organization of carp (Cyprinus carpio) mitochondrial genome.</title>
        <authorList>
            <person name="Chang Y.S."/>
            <person name="Huang F.L."/>
            <person name="Lo T.B."/>
        </authorList>
    </citation>
    <scope>NUCLEOTIDE SEQUENCE [GENOMIC DNA]</scope>
</reference>
<gene>
    <name type="primary">MT-ND4L</name>
    <name type="synonym">MTND4L</name>
    <name type="synonym">NADH4L</name>
    <name type="synonym">ND4L</name>
</gene>
<accession>P67784</accession>
<accession>P24977</accession>
<geneLocation type="mitochondrion"/>
<comment type="function">
    <text evidence="2">Core subunit of the mitochondrial membrane respiratory chain NADH dehydrogenase (Complex I) which catalyzes electron transfer from NADH through the respiratory chain, using ubiquinone as an electron acceptor. Part of the enzyme membrane arm which is embedded in the lipid bilayer and involved in proton translocation.</text>
</comment>
<comment type="catalytic activity">
    <reaction evidence="2">
        <text>a ubiquinone + NADH + 5 H(+)(in) = a ubiquinol + NAD(+) + 4 H(+)(out)</text>
        <dbReference type="Rhea" id="RHEA:29091"/>
        <dbReference type="Rhea" id="RHEA-COMP:9565"/>
        <dbReference type="Rhea" id="RHEA-COMP:9566"/>
        <dbReference type="ChEBI" id="CHEBI:15378"/>
        <dbReference type="ChEBI" id="CHEBI:16389"/>
        <dbReference type="ChEBI" id="CHEBI:17976"/>
        <dbReference type="ChEBI" id="CHEBI:57540"/>
        <dbReference type="ChEBI" id="CHEBI:57945"/>
        <dbReference type="EC" id="7.1.1.2"/>
    </reaction>
    <physiologicalReaction direction="left-to-right" evidence="2">
        <dbReference type="Rhea" id="RHEA:29092"/>
    </physiologicalReaction>
</comment>
<comment type="subcellular location">
    <subcellularLocation>
        <location evidence="1">Mitochondrion membrane</location>
        <topology evidence="1">Multi-pass membrane protein</topology>
    </subcellularLocation>
</comment>
<comment type="similarity">
    <text evidence="4">Belongs to the complex I subunit 4L family.</text>
</comment>
<protein>
    <recommendedName>
        <fullName>NADH-ubiquinone oxidoreductase chain 4L</fullName>
        <ecNumber>7.1.1.2</ecNumber>
    </recommendedName>
    <alternativeName>
        <fullName>NADH dehydrogenase subunit 4L</fullName>
    </alternativeName>
</protein>
<sequence>MTPVHFSFSSAFILGLMGLAFHRTHLLSALLCLEGMMLSLFIALALWALQFESTGFSTAPMLLLAFSACEASTGLALLVATARTHGTDRLQNLNLLQC</sequence>
<proteinExistence type="inferred from homology"/>
<dbReference type="EC" id="7.1.1.2"/>
<dbReference type="EMBL" id="X61010">
    <property type="protein sequence ID" value="CAA43335.1"/>
    <property type="molecule type" value="Genomic_DNA"/>
</dbReference>
<dbReference type="PIR" id="S36005">
    <property type="entry name" value="S36005"/>
</dbReference>
<dbReference type="RefSeq" id="NP_007090.1">
    <property type="nucleotide sequence ID" value="NC_001606.1"/>
</dbReference>
<dbReference type="SMR" id="P67784"/>
<dbReference type="GeneID" id="807768"/>
<dbReference type="KEGG" id="ccar:807768"/>
<dbReference type="CTD" id="4539"/>
<dbReference type="OMA" id="MYRSHLM"/>
<dbReference type="OrthoDB" id="6146597at2759"/>
<dbReference type="Proteomes" id="UP000694384">
    <property type="component" value="Unplaced"/>
</dbReference>
<dbReference type="Proteomes" id="UP000694427">
    <property type="component" value="Unplaced"/>
</dbReference>
<dbReference type="Proteomes" id="UP000694700">
    <property type="component" value="Unplaced"/>
</dbReference>
<dbReference type="Proteomes" id="UP000694701">
    <property type="component" value="Unplaced"/>
</dbReference>
<dbReference type="Proteomes" id="UP001155660">
    <property type="component" value="Mitochondrion MT"/>
</dbReference>
<dbReference type="GO" id="GO:0031966">
    <property type="term" value="C:mitochondrial membrane"/>
    <property type="evidence" value="ECO:0007669"/>
    <property type="project" value="UniProtKB-SubCell"/>
</dbReference>
<dbReference type="GO" id="GO:0045271">
    <property type="term" value="C:respiratory chain complex I"/>
    <property type="evidence" value="ECO:0000250"/>
    <property type="project" value="UniProtKB"/>
</dbReference>
<dbReference type="GO" id="GO:0008137">
    <property type="term" value="F:NADH dehydrogenase (ubiquinone) activity"/>
    <property type="evidence" value="ECO:0000250"/>
    <property type="project" value="UniProtKB"/>
</dbReference>
<dbReference type="GO" id="GO:0042773">
    <property type="term" value="P:ATP synthesis coupled electron transport"/>
    <property type="evidence" value="ECO:0007669"/>
    <property type="project" value="InterPro"/>
</dbReference>
<dbReference type="FunFam" id="1.10.287.3510:FF:000002">
    <property type="entry name" value="NADH-ubiquinone oxidoreductase chain 4L"/>
    <property type="match status" value="1"/>
</dbReference>
<dbReference type="Gene3D" id="1.10.287.3510">
    <property type="match status" value="1"/>
</dbReference>
<dbReference type="InterPro" id="IPR001133">
    <property type="entry name" value="NADH_UbQ_OxRdtase_chain4L/K"/>
</dbReference>
<dbReference type="InterPro" id="IPR039428">
    <property type="entry name" value="NUOK/Mnh_C1-like"/>
</dbReference>
<dbReference type="PANTHER" id="PTHR11434:SF0">
    <property type="entry name" value="NADH-UBIQUINONE OXIDOREDUCTASE CHAIN 4L"/>
    <property type="match status" value="1"/>
</dbReference>
<dbReference type="PANTHER" id="PTHR11434">
    <property type="entry name" value="NADH-UBIQUINONE OXIDOREDUCTASE SUBUNIT ND4L"/>
    <property type="match status" value="1"/>
</dbReference>
<dbReference type="Pfam" id="PF00420">
    <property type="entry name" value="Oxidored_q2"/>
    <property type="match status" value="1"/>
</dbReference>
<organism>
    <name type="scientific">Cyprinus carpio</name>
    <name type="common">Common carp</name>
    <dbReference type="NCBI Taxonomy" id="7962"/>
    <lineage>
        <taxon>Eukaryota</taxon>
        <taxon>Metazoa</taxon>
        <taxon>Chordata</taxon>
        <taxon>Craniata</taxon>
        <taxon>Vertebrata</taxon>
        <taxon>Euteleostomi</taxon>
        <taxon>Actinopterygii</taxon>
        <taxon>Neopterygii</taxon>
        <taxon>Teleostei</taxon>
        <taxon>Ostariophysi</taxon>
        <taxon>Cypriniformes</taxon>
        <taxon>Cyprinidae</taxon>
        <taxon>Cyprininae</taxon>
        <taxon>Cyprinus</taxon>
    </lineage>
</organism>
<name>NU4LM_CYPCA</name>
<keyword id="KW-0249">Electron transport</keyword>
<keyword id="KW-0472">Membrane</keyword>
<keyword id="KW-0496">Mitochondrion</keyword>
<keyword id="KW-0520">NAD</keyword>
<keyword id="KW-1185">Reference proteome</keyword>
<keyword id="KW-0679">Respiratory chain</keyword>
<keyword id="KW-1278">Translocase</keyword>
<keyword id="KW-0812">Transmembrane</keyword>
<keyword id="KW-1133">Transmembrane helix</keyword>
<keyword id="KW-0813">Transport</keyword>
<keyword id="KW-0830">Ubiquinone</keyword>
<feature type="chain" id="PRO_0000118412" description="NADH-ubiquinone oxidoreductase chain 4L">
    <location>
        <begin position="1"/>
        <end position="98"/>
    </location>
</feature>
<feature type="transmembrane region" description="Helical" evidence="3">
    <location>
        <begin position="1"/>
        <end position="21"/>
    </location>
</feature>
<feature type="transmembrane region" description="Helical" evidence="3">
    <location>
        <begin position="29"/>
        <end position="49"/>
    </location>
</feature>
<feature type="transmembrane region" description="Helical" evidence="3">
    <location>
        <begin position="59"/>
        <end position="79"/>
    </location>
</feature>
<evidence type="ECO:0000250" key="1"/>
<evidence type="ECO:0000250" key="2">
    <source>
        <dbReference type="UniProtKB" id="P03901"/>
    </source>
</evidence>
<evidence type="ECO:0000255" key="3"/>
<evidence type="ECO:0000305" key="4"/>